<proteinExistence type="evidence at transcript level"/>
<comment type="function">
    <text evidence="2 3">Homodimeric cytokine expressed predominantly by T-lymphocytes and NK cells that plays an important role in the survival, differentiation, and chemotaxis of eosinophils. Also acts on activated and resting B-cells to induce immunoglobulin production, growth, and differentiation (By similarity). Mechanistically, exerts its biological effects through a receptor composed of IL5RA subunit and the cytokine receptor common subunit beta/CSF2RB. Binding to the receptor leads to activation of various kinases including LYN, SYK and JAK2 and thereby propagates signals through the RAS-MAPK and JAK-STAT5 pathways respectively (By similarity).</text>
</comment>
<comment type="subunit">
    <text evidence="2 3">Homodimer; disulfide-linked. Interacts with IL5RA. Interacts with CSF2RB.</text>
</comment>
<comment type="subcellular location">
    <subcellularLocation>
        <location evidence="2">Secreted</location>
    </subcellularLocation>
</comment>
<comment type="similarity">
    <text evidence="5">Belongs to the IL-5 family.</text>
</comment>
<gene>
    <name type="primary">IL5</name>
</gene>
<feature type="signal peptide" evidence="4">
    <location>
        <begin position="1"/>
        <end position="17"/>
    </location>
</feature>
<feature type="chain" id="PRO_0000015563" description="Interleukin-5">
    <location>
        <begin position="18"/>
        <end position="132"/>
    </location>
</feature>
<feature type="glycosylation site" description="N-linked (GlcNAc...) asparagine" evidence="4">
    <location>
        <position position="45"/>
    </location>
</feature>
<feature type="glycosylation site" description="N-linked (GlcNAc...) asparagine" evidence="4">
    <location>
        <position position="74"/>
    </location>
</feature>
<feature type="glycosylation site" description="N-linked (GlcNAc...) asparagine" evidence="4">
    <location>
        <position position="88"/>
    </location>
</feature>
<feature type="disulfide bond" description="Interchain (with C-103)" evidence="1">
    <location>
        <position position="61"/>
    </location>
</feature>
<feature type="disulfide bond" description="Interchain (with C-61)" evidence="1">
    <location>
        <position position="103"/>
    </location>
</feature>
<reference key="1">
    <citation type="submission" date="1995-05" db="EMBL/GenBank/DDBJ databases">
        <authorList>
            <person name="Mai Z."/>
            <person name="Klei T.R."/>
        </authorList>
    </citation>
    <scope>NUCLEOTIDE SEQUENCE [MRNA]</scope>
    <source>
        <tissue>Spleen</tissue>
    </source>
</reference>
<organism>
    <name type="scientific">Meriones unguiculatus</name>
    <name type="common">Mongolian jird</name>
    <name type="synonym">Gerbillus unguiculatus</name>
    <dbReference type="NCBI Taxonomy" id="10047"/>
    <lineage>
        <taxon>Eukaryota</taxon>
        <taxon>Metazoa</taxon>
        <taxon>Chordata</taxon>
        <taxon>Craniata</taxon>
        <taxon>Vertebrata</taxon>
        <taxon>Euteleostomi</taxon>
        <taxon>Mammalia</taxon>
        <taxon>Eutheria</taxon>
        <taxon>Euarchontoglires</taxon>
        <taxon>Glires</taxon>
        <taxon>Rodentia</taxon>
        <taxon>Myomorpha</taxon>
        <taxon>Muroidea</taxon>
        <taxon>Muridae</taxon>
        <taxon>Gerbillinae</taxon>
        <taxon>Meriones</taxon>
    </lineage>
</organism>
<evidence type="ECO:0000250" key="1"/>
<evidence type="ECO:0000250" key="2">
    <source>
        <dbReference type="UniProtKB" id="P04401"/>
    </source>
</evidence>
<evidence type="ECO:0000250" key="3">
    <source>
        <dbReference type="UniProtKB" id="P05113"/>
    </source>
</evidence>
<evidence type="ECO:0000255" key="4"/>
<evidence type="ECO:0000305" key="5"/>
<keyword id="KW-0202">Cytokine</keyword>
<keyword id="KW-1015">Disulfide bond</keyword>
<keyword id="KW-0325">Glycoprotein</keyword>
<keyword id="KW-0339">Growth factor</keyword>
<keyword id="KW-0964">Secreted</keyword>
<keyword id="KW-0732">Signal</keyword>
<sequence length="132" mass="15164">MRLPLQLSILTLAWVWAVALEIPMSAVVKETLIQLSTHRALLTSNETVRLPVPTHKNHQLCIGEIFQGLDILKNQTARGGAVETLFQNLSLIKKYIDRQKEKCGEERRRARQFLDYLQEFLGVMSTEWTMEG</sequence>
<accession>Q62575</accession>
<protein>
    <recommendedName>
        <fullName>Interleukin-5</fullName>
        <shortName>IL-5</shortName>
    </recommendedName>
    <alternativeName>
        <fullName>Eosinophil differentiation factor</fullName>
    </alternativeName>
    <alternativeName>
        <fullName>T-cell replacing factor</fullName>
        <shortName>TRF</shortName>
    </alternativeName>
</protein>
<dbReference type="EMBL" id="L37780">
    <property type="protein sequence ID" value="AAA65675.1"/>
    <property type="molecule type" value="mRNA"/>
</dbReference>
<dbReference type="SMR" id="Q62575"/>
<dbReference type="GlyCosmos" id="Q62575">
    <property type="glycosylation" value="3 sites, No reported glycans"/>
</dbReference>
<dbReference type="Ensembl" id="ENSMUGT00000025203">
    <property type="protein sequence ID" value="ENSMUGP00000021958"/>
    <property type="gene ID" value="ENSMUGG00000018446"/>
</dbReference>
<dbReference type="OrthoDB" id="9446172at2759"/>
<dbReference type="GO" id="GO:0005615">
    <property type="term" value="C:extracellular space"/>
    <property type="evidence" value="ECO:0007669"/>
    <property type="project" value="UniProtKB-KW"/>
</dbReference>
<dbReference type="GO" id="GO:0005125">
    <property type="term" value="F:cytokine activity"/>
    <property type="evidence" value="ECO:0007669"/>
    <property type="project" value="UniProtKB-KW"/>
</dbReference>
<dbReference type="GO" id="GO:0008083">
    <property type="term" value="F:growth factor activity"/>
    <property type="evidence" value="ECO:0007669"/>
    <property type="project" value="UniProtKB-KW"/>
</dbReference>
<dbReference type="GO" id="GO:0005137">
    <property type="term" value="F:interleukin-5 receptor binding"/>
    <property type="evidence" value="ECO:0007669"/>
    <property type="project" value="InterPro"/>
</dbReference>
<dbReference type="GO" id="GO:0006955">
    <property type="term" value="P:immune response"/>
    <property type="evidence" value="ECO:0007669"/>
    <property type="project" value="InterPro"/>
</dbReference>
<dbReference type="Gene3D" id="1.20.1250.10">
    <property type="match status" value="1"/>
</dbReference>
<dbReference type="InterPro" id="IPR009079">
    <property type="entry name" value="4_helix_cytokine-like_core"/>
</dbReference>
<dbReference type="InterPro" id="IPR000186">
    <property type="entry name" value="IL-5"/>
</dbReference>
<dbReference type="PANTHER" id="PTHR48491">
    <property type="entry name" value="INTERLEUKIN-5"/>
    <property type="match status" value="1"/>
</dbReference>
<dbReference type="PANTHER" id="PTHR48491:SF1">
    <property type="entry name" value="INTERLEUKIN-5"/>
    <property type="match status" value="1"/>
</dbReference>
<dbReference type="Pfam" id="PF02025">
    <property type="entry name" value="IL5"/>
    <property type="match status" value="1"/>
</dbReference>
<dbReference type="PRINTS" id="PR00432">
    <property type="entry name" value="INTERLEUKIN5"/>
</dbReference>
<dbReference type="SUPFAM" id="SSF47266">
    <property type="entry name" value="4-helical cytokines"/>
    <property type="match status" value="1"/>
</dbReference>
<name>IL5_MERUN</name>